<dbReference type="EMBL" id="AB026651">
    <property type="protein sequence ID" value="BAB11307.1"/>
    <property type="molecule type" value="Genomic_DNA"/>
</dbReference>
<dbReference type="EMBL" id="CP002688">
    <property type="protein sequence ID" value="AED95010.1"/>
    <property type="molecule type" value="Genomic_DNA"/>
</dbReference>
<dbReference type="EMBL" id="AY124001">
    <property type="status" value="NOT_ANNOTATED_CDS"/>
    <property type="molecule type" value="mRNA"/>
</dbReference>
<dbReference type="RefSeq" id="NP_199192.1">
    <property type="nucleotide sequence ID" value="NM_123746.3"/>
</dbReference>
<dbReference type="SMR" id="Q9FG85"/>
<dbReference type="FunCoup" id="Q9FG85">
    <property type="interactions" value="136"/>
</dbReference>
<dbReference type="PaxDb" id="3702-AT5G43790.1"/>
<dbReference type="ProteomicsDB" id="249296"/>
<dbReference type="EnsemblPlants" id="AT5G43790.1">
    <property type="protein sequence ID" value="AT5G43790.1"/>
    <property type="gene ID" value="AT5G43790"/>
</dbReference>
<dbReference type="GeneID" id="834401"/>
<dbReference type="Gramene" id="AT5G43790.1">
    <property type="protein sequence ID" value="AT5G43790.1"/>
    <property type="gene ID" value="AT5G43790"/>
</dbReference>
<dbReference type="KEGG" id="ath:AT5G43790"/>
<dbReference type="Araport" id="AT5G43790"/>
<dbReference type="TAIR" id="AT5G43790"/>
<dbReference type="eggNOG" id="KOG4197">
    <property type="taxonomic scope" value="Eukaryota"/>
</dbReference>
<dbReference type="HOGENOM" id="CLU_002706_0_6_1"/>
<dbReference type="InParanoid" id="Q9FG85"/>
<dbReference type="OMA" id="ECIKKMP"/>
<dbReference type="PhylomeDB" id="Q9FG85"/>
<dbReference type="PRO" id="PR:Q9FG85"/>
<dbReference type="Proteomes" id="UP000006548">
    <property type="component" value="Chromosome 5"/>
</dbReference>
<dbReference type="ExpressionAtlas" id="Q9FG85">
    <property type="expression patterns" value="baseline and differential"/>
</dbReference>
<dbReference type="GO" id="GO:0003723">
    <property type="term" value="F:RNA binding"/>
    <property type="evidence" value="ECO:0007669"/>
    <property type="project" value="InterPro"/>
</dbReference>
<dbReference type="GO" id="GO:0009451">
    <property type="term" value="P:RNA modification"/>
    <property type="evidence" value="ECO:0007669"/>
    <property type="project" value="InterPro"/>
</dbReference>
<dbReference type="FunFam" id="1.25.40.10:FF:000242">
    <property type="entry name" value="Pentatricopeptide repeat-containing protein"/>
    <property type="match status" value="1"/>
</dbReference>
<dbReference type="FunFam" id="1.25.40.10:FF:001630">
    <property type="entry name" value="Pentatricopeptide repeat-containing protein At5g43790"/>
    <property type="match status" value="1"/>
</dbReference>
<dbReference type="Gene3D" id="1.25.40.10">
    <property type="entry name" value="Tetratricopeptide repeat domain"/>
    <property type="match status" value="2"/>
</dbReference>
<dbReference type="InterPro" id="IPR046848">
    <property type="entry name" value="E_motif"/>
</dbReference>
<dbReference type="InterPro" id="IPR002885">
    <property type="entry name" value="Pentatricopeptide_rpt"/>
</dbReference>
<dbReference type="InterPro" id="IPR046960">
    <property type="entry name" value="PPR_At4g14850-like_plant"/>
</dbReference>
<dbReference type="InterPro" id="IPR011990">
    <property type="entry name" value="TPR-like_helical_dom_sf"/>
</dbReference>
<dbReference type="NCBIfam" id="TIGR00756">
    <property type="entry name" value="PPR"/>
    <property type="match status" value="3"/>
</dbReference>
<dbReference type="PANTHER" id="PTHR47926:SF450">
    <property type="entry name" value="DYW DOMAIN-CONTAINING PROTEIN"/>
    <property type="match status" value="1"/>
</dbReference>
<dbReference type="PANTHER" id="PTHR47926">
    <property type="entry name" value="PENTATRICOPEPTIDE REPEAT-CONTAINING PROTEIN"/>
    <property type="match status" value="1"/>
</dbReference>
<dbReference type="Pfam" id="PF20431">
    <property type="entry name" value="E_motif"/>
    <property type="match status" value="1"/>
</dbReference>
<dbReference type="Pfam" id="PF01535">
    <property type="entry name" value="PPR"/>
    <property type="match status" value="5"/>
</dbReference>
<dbReference type="PROSITE" id="PS51375">
    <property type="entry name" value="PPR"/>
    <property type="match status" value="9"/>
</dbReference>
<keyword id="KW-1185">Reference proteome</keyword>
<keyword id="KW-0677">Repeat</keyword>
<evidence type="ECO:0000305" key="1"/>
<name>PP415_ARATH</name>
<accession>Q9FG85</accession>
<feature type="chain" id="PRO_0000363552" description="Pentatricopeptide repeat-containing protein At5g43790">
    <location>
        <begin position="1"/>
        <end position="460"/>
    </location>
</feature>
<feature type="repeat" description="PPR 1">
    <location>
        <begin position="70"/>
        <end position="107"/>
    </location>
</feature>
<feature type="repeat" description="PPR 2">
    <location>
        <begin position="111"/>
        <end position="142"/>
    </location>
</feature>
<feature type="repeat" description="PPR 3">
    <location>
        <begin position="149"/>
        <end position="179"/>
    </location>
</feature>
<feature type="repeat" description="PPR 4">
    <location>
        <begin position="180"/>
        <end position="214"/>
    </location>
</feature>
<feature type="repeat" description="PPR 5">
    <location>
        <begin position="215"/>
        <end position="249"/>
    </location>
</feature>
<feature type="repeat" description="PPR 6">
    <location>
        <begin position="250"/>
        <end position="280"/>
    </location>
</feature>
<feature type="repeat" description="PPR 7">
    <location>
        <begin position="281"/>
        <end position="315"/>
    </location>
</feature>
<feature type="repeat" description="PPR 8">
    <location>
        <begin position="316"/>
        <end position="351"/>
    </location>
</feature>
<feature type="repeat" description="PPR 9">
    <location>
        <begin position="352"/>
        <end position="382"/>
    </location>
</feature>
<feature type="region of interest" description="Type E motif; degenerate">
    <location>
        <begin position="387"/>
        <end position="460"/>
    </location>
</feature>
<gene>
    <name type="primary">PCMP-E30</name>
    <name type="ordered locus">At5g43790</name>
    <name type="ORF">MQD19.14</name>
</gene>
<organism>
    <name type="scientific">Arabidopsis thaliana</name>
    <name type="common">Mouse-ear cress</name>
    <dbReference type="NCBI Taxonomy" id="3702"/>
    <lineage>
        <taxon>Eukaryota</taxon>
        <taxon>Viridiplantae</taxon>
        <taxon>Streptophyta</taxon>
        <taxon>Embryophyta</taxon>
        <taxon>Tracheophyta</taxon>
        <taxon>Spermatophyta</taxon>
        <taxon>Magnoliopsida</taxon>
        <taxon>eudicotyledons</taxon>
        <taxon>Gunneridae</taxon>
        <taxon>Pentapetalae</taxon>
        <taxon>rosids</taxon>
        <taxon>malvids</taxon>
        <taxon>Brassicales</taxon>
        <taxon>Brassicaceae</taxon>
        <taxon>Camelineae</taxon>
        <taxon>Arabidopsis</taxon>
    </lineage>
</organism>
<reference key="1">
    <citation type="submission" date="1999-04" db="EMBL/GenBank/DDBJ databases">
        <title>Structural analysis of Arabidopsis thaliana chromosome 5. XI.</title>
        <authorList>
            <person name="Kaneko T."/>
            <person name="Katoh T."/>
            <person name="Asamizu E."/>
            <person name="Sato S."/>
            <person name="Nakamura Y."/>
            <person name="Kotani H."/>
            <person name="Tabata S."/>
        </authorList>
    </citation>
    <scope>NUCLEOTIDE SEQUENCE [LARGE SCALE GENOMIC DNA]</scope>
    <source>
        <strain>cv. Columbia</strain>
    </source>
</reference>
<reference key="2">
    <citation type="journal article" date="2017" name="Plant J.">
        <title>Araport11: a complete reannotation of the Arabidopsis thaliana reference genome.</title>
        <authorList>
            <person name="Cheng C.Y."/>
            <person name="Krishnakumar V."/>
            <person name="Chan A.P."/>
            <person name="Thibaud-Nissen F."/>
            <person name="Schobel S."/>
            <person name="Town C.D."/>
        </authorList>
    </citation>
    <scope>GENOME REANNOTATION</scope>
    <source>
        <strain>cv. Columbia</strain>
    </source>
</reference>
<reference key="3">
    <citation type="journal article" date="2003" name="Science">
        <title>Empirical analysis of transcriptional activity in the Arabidopsis genome.</title>
        <authorList>
            <person name="Yamada K."/>
            <person name="Lim J."/>
            <person name="Dale J.M."/>
            <person name="Chen H."/>
            <person name="Shinn P."/>
            <person name="Palm C.J."/>
            <person name="Southwick A.M."/>
            <person name="Wu H.C."/>
            <person name="Kim C.J."/>
            <person name="Nguyen M."/>
            <person name="Pham P.K."/>
            <person name="Cheuk R.F."/>
            <person name="Karlin-Newmann G."/>
            <person name="Liu S.X."/>
            <person name="Lam B."/>
            <person name="Sakano H."/>
            <person name="Wu T."/>
            <person name="Yu G."/>
            <person name="Miranda M."/>
            <person name="Quach H.L."/>
            <person name="Tripp M."/>
            <person name="Chang C.H."/>
            <person name="Lee J.M."/>
            <person name="Toriumi M.J."/>
            <person name="Chan M.M."/>
            <person name="Tang C.C."/>
            <person name="Onodera C.S."/>
            <person name="Deng J.M."/>
            <person name="Akiyama K."/>
            <person name="Ansari Y."/>
            <person name="Arakawa T."/>
            <person name="Banh J."/>
            <person name="Banno F."/>
            <person name="Bowser L."/>
            <person name="Brooks S.Y."/>
            <person name="Carninci P."/>
            <person name="Chao Q."/>
            <person name="Choy N."/>
            <person name="Enju A."/>
            <person name="Goldsmith A.D."/>
            <person name="Gurjal M."/>
            <person name="Hansen N.F."/>
            <person name="Hayashizaki Y."/>
            <person name="Johnson-Hopson C."/>
            <person name="Hsuan V.W."/>
            <person name="Iida K."/>
            <person name="Karnes M."/>
            <person name="Khan S."/>
            <person name="Koesema E."/>
            <person name="Ishida J."/>
            <person name="Jiang P.X."/>
            <person name="Jones T."/>
            <person name="Kawai J."/>
            <person name="Kamiya A."/>
            <person name="Meyers C."/>
            <person name="Nakajima M."/>
            <person name="Narusaka M."/>
            <person name="Seki M."/>
            <person name="Sakurai T."/>
            <person name="Satou M."/>
            <person name="Tamse R."/>
            <person name="Vaysberg M."/>
            <person name="Wallender E.K."/>
            <person name="Wong C."/>
            <person name="Yamamura Y."/>
            <person name="Yuan S."/>
            <person name="Shinozaki K."/>
            <person name="Davis R.W."/>
            <person name="Theologis A."/>
            <person name="Ecker J.R."/>
        </authorList>
    </citation>
    <scope>NUCLEOTIDE SEQUENCE [LARGE SCALE MRNA] OF 33-460</scope>
    <source>
        <strain>cv. Columbia</strain>
    </source>
</reference>
<reference key="4">
    <citation type="journal article" date="2000" name="Plant Mol. Biol.">
        <title>In Arabidopsis thaliana, 1% of the genome codes for a novel protein family unique to plants.</title>
        <authorList>
            <person name="Aubourg S."/>
            <person name="Boudet N."/>
            <person name="Kreis M."/>
            <person name="Lecharny A."/>
        </authorList>
    </citation>
    <scope>GENE FAMILY</scope>
</reference>
<reference key="5">
    <citation type="journal article" date="2004" name="Plant Cell">
        <title>Genome-wide analysis of Arabidopsis pentatricopeptide repeat proteins reveals their essential role in organelle biogenesis.</title>
        <authorList>
            <person name="Lurin C."/>
            <person name="Andres C."/>
            <person name="Aubourg S."/>
            <person name="Bellaoui M."/>
            <person name="Bitton F."/>
            <person name="Bruyere C."/>
            <person name="Caboche M."/>
            <person name="Debast C."/>
            <person name="Gualberto J."/>
            <person name="Hoffmann B."/>
            <person name="Lecharny A."/>
            <person name="Le Ret M."/>
            <person name="Martin-Magniette M.-L."/>
            <person name="Mireau H."/>
            <person name="Peeters N."/>
            <person name="Renou J.-P."/>
            <person name="Szurek B."/>
            <person name="Taconnat L."/>
            <person name="Small I."/>
        </authorList>
    </citation>
    <scope>GENE FAMILY</scope>
</reference>
<comment type="similarity">
    <text evidence="1">Belongs to the PPR family. PCMP-E subfamily.</text>
</comment>
<comment type="online information" name="Pentatricopeptide repeat proteins">
    <link uri="https://ppr.plantenergy.uwa.edu.au"/>
</comment>
<proteinExistence type="evidence at transcript level"/>
<sequence>MTSPSTSKNHRCLNLISKCKSLQNLKQIHAQIITIGLSHHTYPLSKLLHLSSTVCLSYALSILRQIPNPSVFLYNTLISSIVSNHNSTQTHLAFSLYDQILSSRSNFVRPNEFTYPSLFKASGFDAQWHRHGRALHAHVLKFLEPVNHDRFVQAALVGFYANCGKLREARSLFERIREPDLATWNTLLAAYANSEEIDSDEEVLLLFMRMQVRPNELSLVALIKSCANLGEFVRGVWAHVYVLKNNLTLNQFVGTSLIDLYSKCGCLSFARKVFDEMSQRDVSCYNAMIRGLAVHGFGQEGIELYKSLISQGLVPDSATFVVTISACSHSGLVDEGLQIFNSMKAVYGIEPKVEHYGCLVDLLGRSGRLEEAEECIKKMPVKPNATLWRSFLGSSQTHGDFERGEIALKHLLGLEFENSGNYVLLSNIYAGVNRWTDVEKTRELMKDHRVNKSPGISTLN</sequence>
<protein>
    <recommendedName>
        <fullName>Pentatricopeptide repeat-containing protein At5g43790</fullName>
    </recommendedName>
</protein>